<dbReference type="EC" id="6.3.2.8" evidence="1"/>
<dbReference type="EMBL" id="CP000908">
    <property type="protein sequence ID" value="ABY31331.1"/>
    <property type="molecule type" value="Genomic_DNA"/>
</dbReference>
<dbReference type="RefSeq" id="WP_003602503.1">
    <property type="nucleotide sequence ID" value="NC_010172.1"/>
</dbReference>
<dbReference type="SMR" id="A9VWV4"/>
<dbReference type="KEGG" id="mex:Mext_2942"/>
<dbReference type="eggNOG" id="COG0773">
    <property type="taxonomic scope" value="Bacteria"/>
</dbReference>
<dbReference type="HOGENOM" id="CLU_028104_2_2_5"/>
<dbReference type="BioCyc" id="MEXT419610:MEXT_RS14820-MONOMER"/>
<dbReference type="UniPathway" id="UPA00219"/>
<dbReference type="GO" id="GO:0005737">
    <property type="term" value="C:cytoplasm"/>
    <property type="evidence" value="ECO:0007669"/>
    <property type="project" value="UniProtKB-SubCell"/>
</dbReference>
<dbReference type="GO" id="GO:0005524">
    <property type="term" value="F:ATP binding"/>
    <property type="evidence" value="ECO:0007669"/>
    <property type="project" value="UniProtKB-UniRule"/>
</dbReference>
<dbReference type="GO" id="GO:0008763">
    <property type="term" value="F:UDP-N-acetylmuramate-L-alanine ligase activity"/>
    <property type="evidence" value="ECO:0007669"/>
    <property type="project" value="UniProtKB-UniRule"/>
</dbReference>
<dbReference type="GO" id="GO:0051301">
    <property type="term" value="P:cell division"/>
    <property type="evidence" value="ECO:0007669"/>
    <property type="project" value="UniProtKB-KW"/>
</dbReference>
<dbReference type="GO" id="GO:0071555">
    <property type="term" value="P:cell wall organization"/>
    <property type="evidence" value="ECO:0007669"/>
    <property type="project" value="UniProtKB-KW"/>
</dbReference>
<dbReference type="GO" id="GO:0009252">
    <property type="term" value="P:peptidoglycan biosynthetic process"/>
    <property type="evidence" value="ECO:0007669"/>
    <property type="project" value="UniProtKB-UniRule"/>
</dbReference>
<dbReference type="GO" id="GO:0008360">
    <property type="term" value="P:regulation of cell shape"/>
    <property type="evidence" value="ECO:0007669"/>
    <property type="project" value="UniProtKB-KW"/>
</dbReference>
<dbReference type="Gene3D" id="3.90.190.20">
    <property type="entry name" value="Mur ligase, C-terminal domain"/>
    <property type="match status" value="1"/>
</dbReference>
<dbReference type="Gene3D" id="3.40.1190.10">
    <property type="entry name" value="Mur-like, catalytic domain"/>
    <property type="match status" value="1"/>
</dbReference>
<dbReference type="Gene3D" id="3.40.50.720">
    <property type="entry name" value="NAD(P)-binding Rossmann-like Domain"/>
    <property type="match status" value="1"/>
</dbReference>
<dbReference type="HAMAP" id="MF_00046">
    <property type="entry name" value="MurC"/>
    <property type="match status" value="1"/>
</dbReference>
<dbReference type="InterPro" id="IPR036565">
    <property type="entry name" value="Mur-like_cat_sf"/>
</dbReference>
<dbReference type="InterPro" id="IPR004101">
    <property type="entry name" value="Mur_ligase_C"/>
</dbReference>
<dbReference type="InterPro" id="IPR036615">
    <property type="entry name" value="Mur_ligase_C_dom_sf"/>
</dbReference>
<dbReference type="InterPro" id="IPR013221">
    <property type="entry name" value="Mur_ligase_cen"/>
</dbReference>
<dbReference type="InterPro" id="IPR000713">
    <property type="entry name" value="Mur_ligase_N"/>
</dbReference>
<dbReference type="InterPro" id="IPR050061">
    <property type="entry name" value="MurCDEF_pg_biosynth"/>
</dbReference>
<dbReference type="InterPro" id="IPR005758">
    <property type="entry name" value="UDP-N-AcMur_Ala_ligase_MurC"/>
</dbReference>
<dbReference type="NCBIfam" id="TIGR01082">
    <property type="entry name" value="murC"/>
    <property type="match status" value="1"/>
</dbReference>
<dbReference type="PANTHER" id="PTHR43445:SF3">
    <property type="entry name" value="UDP-N-ACETYLMURAMATE--L-ALANINE LIGASE"/>
    <property type="match status" value="1"/>
</dbReference>
<dbReference type="PANTHER" id="PTHR43445">
    <property type="entry name" value="UDP-N-ACETYLMURAMATE--L-ALANINE LIGASE-RELATED"/>
    <property type="match status" value="1"/>
</dbReference>
<dbReference type="Pfam" id="PF01225">
    <property type="entry name" value="Mur_ligase"/>
    <property type="match status" value="1"/>
</dbReference>
<dbReference type="Pfam" id="PF02875">
    <property type="entry name" value="Mur_ligase_C"/>
    <property type="match status" value="1"/>
</dbReference>
<dbReference type="Pfam" id="PF08245">
    <property type="entry name" value="Mur_ligase_M"/>
    <property type="match status" value="1"/>
</dbReference>
<dbReference type="SUPFAM" id="SSF51984">
    <property type="entry name" value="MurCD N-terminal domain"/>
    <property type="match status" value="1"/>
</dbReference>
<dbReference type="SUPFAM" id="SSF53623">
    <property type="entry name" value="MurD-like peptide ligases, catalytic domain"/>
    <property type="match status" value="1"/>
</dbReference>
<dbReference type="SUPFAM" id="SSF53244">
    <property type="entry name" value="MurD-like peptide ligases, peptide-binding domain"/>
    <property type="match status" value="1"/>
</dbReference>
<organism>
    <name type="scientific">Methylorubrum extorquens (strain PA1)</name>
    <name type="common">Methylobacterium extorquens</name>
    <dbReference type="NCBI Taxonomy" id="419610"/>
    <lineage>
        <taxon>Bacteria</taxon>
        <taxon>Pseudomonadati</taxon>
        <taxon>Pseudomonadota</taxon>
        <taxon>Alphaproteobacteria</taxon>
        <taxon>Hyphomicrobiales</taxon>
        <taxon>Methylobacteriaceae</taxon>
        <taxon>Methylorubrum</taxon>
    </lineage>
</organism>
<accession>A9VWV4</accession>
<gene>
    <name evidence="1" type="primary">murC</name>
    <name type="ordered locus">Mext_2942</name>
</gene>
<sequence>MKLPEKLGPIHFIGIGGIGMSGIAEVMANLGYTVQGSDANDNANVRRLAENGIRTFVGHRAENVENAALVVVSTAIRRDNPELIEARERRLPVVRRAEMLAELMRFKSCVAVAGTHGKTTTTSLVATLLDAGNLDPTVINGGIINAYGTNARMGAGDWMVVEADESDGTFLKLPADVAIVTNIDPEHLDHFGSFEAIKDAFRRFIDNIPFYGFAVMCIDHPIVQDLVGHIEDRRIITYGENPQADVRLIDIDLKGGQSRFRVMIRDRRPGFRMEIEDLVLPMPGRHNALNATAALAVAHELGVPSDAIRKALAGFGGVKRRFTRTGEWNGATIFDDYGHHPVEIQAVLRAARASTDGRVIAIVQPHRYTRLQSLFEDFCTCFNDADTVIVAPVYAAGEAPIEGIDRDSLIAGLKARGHRDAVALERPEDLARLVAGRAGSNDYVVCLGAGTITQWAYALPGELAALQG</sequence>
<protein>
    <recommendedName>
        <fullName evidence="1">UDP-N-acetylmuramate--L-alanine ligase</fullName>
        <ecNumber evidence="1">6.3.2.8</ecNumber>
    </recommendedName>
    <alternativeName>
        <fullName evidence="1">UDP-N-acetylmuramoyl-L-alanine synthetase</fullName>
    </alternativeName>
</protein>
<feature type="chain" id="PRO_1000091114" description="UDP-N-acetylmuramate--L-alanine ligase">
    <location>
        <begin position="1"/>
        <end position="468"/>
    </location>
</feature>
<feature type="binding site" evidence="1">
    <location>
        <begin position="114"/>
        <end position="120"/>
    </location>
    <ligand>
        <name>ATP</name>
        <dbReference type="ChEBI" id="CHEBI:30616"/>
    </ligand>
</feature>
<name>MURC_METEP</name>
<keyword id="KW-0067">ATP-binding</keyword>
<keyword id="KW-0131">Cell cycle</keyword>
<keyword id="KW-0132">Cell division</keyword>
<keyword id="KW-0133">Cell shape</keyword>
<keyword id="KW-0961">Cell wall biogenesis/degradation</keyword>
<keyword id="KW-0963">Cytoplasm</keyword>
<keyword id="KW-0436">Ligase</keyword>
<keyword id="KW-0547">Nucleotide-binding</keyword>
<keyword id="KW-0573">Peptidoglycan synthesis</keyword>
<evidence type="ECO:0000255" key="1">
    <source>
        <dbReference type="HAMAP-Rule" id="MF_00046"/>
    </source>
</evidence>
<proteinExistence type="inferred from homology"/>
<reference key="1">
    <citation type="submission" date="2007-12" db="EMBL/GenBank/DDBJ databases">
        <title>Complete sequence of Methylobacterium extorquens PA1.</title>
        <authorList>
            <consortium name="US DOE Joint Genome Institute"/>
            <person name="Copeland A."/>
            <person name="Lucas S."/>
            <person name="Lapidus A."/>
            <person name="Barry K."/>
            <person name="Glavina del Rio T."/>
            <person name="Dalin E."/>
            <person name="Tice H."/>
            <person name="Pitluck S."/>
            <person name="Saunders E."/>
            <person name="Brettin T."/>
            <person name="Bruce D."/>
            <person name="Detter J.C."/>
            <person name="Han C."/>
            <person name="Schmutz J."/>
            <person name="Larimer F."/>
            <person name="Land M."/>
            <person name="Hauser L."/>
            <person name="Kyrpides N."/>
            <person name="Kim E."/>
            <person name="Marx C."/>
            <person name="Richardson P."/>
        </authorList>
    </citation>
    <scope>NUCLEOTIDE SEQUENCE [LARGE SCALE GENOMIC DNA]</scope>
    <source>
        <strain>PA1</strain>
    </source>
</reference>
<comment type="function">
    <text evidence="1">Cell wall formation.</text>
</comment>
<comment type="catalytic activity">
    <reaction evidence="1">
        <text>UDP-N-acetyl-alpha-D-muramate + L-alanine + ATP = UDP-N-acetyl-alpha-D-muramoyl-L-alanine + ADP + phosphate + H(+)</text>
        <dbReference type="Rhea" id="RHEA:23372"/>
        <dbReference type="ChEBI" id="CHEBI:15378"/>
        <dbReference type="ChEBI" id="CHEBI:30616"/>
        <dbReference type="ChEBI" id="CHEBI:43474"/>
        <dbReference type="ChEBI" id="CHEBI:57972"/>
        <dbReference type="ChEBI" id="CHEBI:70757"/>
        <dbReference type="ChEBI" id="CHEBI:83898"/>
        <dbReference type="ChEBI" id="CHEBI:456216"/>
        <dbReference type="EC" id="6.3.2.8"/>
    </reaction>
</comment>
<comment type="pathway">
    <text evidence="1">Cell wall biogenesis; peptidoglycan biosynthesis.</text>
</comment>
<comment type="subcellular location">
    <subcellularLocation>
        <location evidence="1">Cytoplasm</location>
    </subcellularLocation>
</comment>
<comment type="similarity">
    <text evidence="1">Belongs to the MurCDEF family.</text>
</comment>